<dbReference type="EC" id="2.1.2.11" evidence="1"/>
<dbReference type="EMBL" id="BA000033">
    <property type="protein sequence ID" value="BAB96383.1"/>
    <property type="molecule type" value="Genomic_DNA"/>
</dbReference>
<dbReference type="RefSeq" id="WP_000860047.1">
    <property type="nucleotide sequence ID" value="NC_003923.1"/>
</dbReference>
<dbReference type="SMR" id="P65657"/>
<dbReference type="KEGG" id="sam:MW2518"/>
<dbReference type="HOGENOM" id="CLU_036645_1_0_9"/>
<dbReference type="UniPathway" id="UPA00028">
    <property type="reaction ID" value="UER00003"/>
</dbReference>
<dbReference type="GO" id="GO:0005737">
    <property type="term" value="C:cytoplasm"/>
    <property type="evidence" value="ECO:0007669"/>
    <property type="project" value="UniProtKB-SubCell"/>
</dbReference>
<dbReference type="GO" id="GO:0003864">
    <property type="term" value="F:3-methyl-2-oxobutanoate hydroxymethyltransferase activity"/>
    <property type="evidence" value="ECO:0007669"/>
    <property type="project" value="UniProtKB-UniRule"/>
</dbReference>
<dbReference type="GO" id="GO:0000287">
    <property type="term" value="F:magnesium ion binding"/>
    <property type="evidence" value="ECO:0007669"/>
    <property type="project" value="TreeGrafter"/>
</dbReference>
<dbReference type="GO" id="GO:0015940">
    <property type="term" value="P:pantothenate biosynthetic process"/>
    <property type="evidence" value="ECO:0007669"/>
    <property type="project" value="UniProtKB-UniRule"/>
</dbReference>
<dbReference type="CDD" id="cd06557">
    <property type="entry name" value="KPHMT-like"/>
    <property type="match status" value="1"/>
</dbReference>
<dbReference type="FunFam" id="3.20.20.60:FF:000030">
    <property type="entry name" value="3-methyl-2-oxobutanoate hydroxymethyltransferase"/>
    <property type="match status" value="1"/>
</dbReference>
<dbReference type="Gene3D" id="3.20.20.60">
    <property type="entry name" value="Phosphoenolpyruvate-binding domains"/>
    <property type="match status" value="1"/>
</dbReference>
<dbReference type="HAMAP" id="MF_00156">
    <property type="entry name" value="PanB"/>
    <property type="match status" value="1"/>
</dbReference>
<dbReference type="InterPro" id="IPR003700">
    <property type="entry name" value="Pantoate_hydroxy_MeTrfase"/>
</dbReference>
<dbReference type="InterPro" id="IPR015813">
    <property type="entry name" value="Pyrv/PenolPyrv_kinase-like_dom"/>
</dbReference>
<dbReference type="InterPro" id="IPR040442">
    <property type="entry name" value="Pyrv_kinase-like_dom_sf"/>
</dbReference>
<dbReference type="NCBIfam" id="TIGR00222">
    <property type="entry name" value="panB"/>
    <property type="match status" value="1"/>
</dbReference>
<dbReference type="NCBIfam" id="NF001452">
    <property type="entry name" value="PRK00311.1"/>
    <property type="match status" value="1"/>
</dbReference>
<dbReference type="PANTHER" id="PTHR20881">
    <property type="entry name" value="3-METHYL-2-OXOBUTANOATE HYDROXYMETHYLTRANSFERASE"/>
    <property type="match status" value="1"/>
</dbReference>
<dbReference type="PANTHER" id="PTHR20881:SF0">
    <property type="entry name" value="3-METHYL-2-OXOBUTANOATE HYDROXYMETHYLTRANSFERASE"/>
    <property type="match status" value="1"/>
</dbReference>
<dbReference type="Pfam" id="PF02548">
    <property type="entry name" value="Pantoate_transf"/>
    <property type="match status" value="1"/>
</dbReference>
<dbReference type="PIRSF" id="PIRSF000388">
    <property type="entry name" value="Pantoate_hydroxy_MeTrfase"/>
    <property type="match status" value="1"/>
</dbReference>
<dbReference type="SUPFAM" id="SSF51621">
    <property type="entry name" value="Phosphoenolpyruvate/pyruvate domain"/>
    <property type="match status" value="1"/>
</dbReference>
<name>PANB_STAAW</name>
<comment type="function">
    <text evidence="1">Catalyzes the reversible reaction in which hydroxymethyl group from 5,10-methylenetetrahydrofolate is transferred onto alpha-ketoisovalerate to form ketopantoate.</text>
</comment>
<comment type="catalytic activity">
    <reaction evidence="1">
        <text>3-methyl-2-oxobutanoate + (6R)-5,10-methylene-5,6,7,8-tetrahydrofolate + H2O = 2-dehydropantoate + (6S)-5,6,7,8-tetrahydrofolate</text>
        <dbReference type="Rhea" id="RHEA:11824"/>
        <dbReference type="ChEBI" id="CHEBI:11561"/>
        <dbReference type="ChEBI" id="CHEBI:11851"/>
        <dbReference type="ChEBI" id="CHEBI:15377"/>
        <dbReference type="ChEBI" id="CHEBI:15636"/>
        <dbReference type="ChEBI" id="CHEBI:57453"/>
        <dbReference type="EC" id="2.1.2.11"/>
    </reaction>
</comment>
<comment type="cofactor">
    <cofactor evidence="1">
        <name>Mg(2+)</name>
        <dbReference type="ChEBI" id="CHEBI:18420"/>
    </cofactor>
    <text evidence="1">Binds 1 Mg(2+) ion per subunit.</text>
</comment>
<comment type="pathway">
    <text evidence="1">Cofactor biosynthesis; (R)-pantothenate biosynthesis; (R)-pantoate from 3-methyl-2-oxobutanoate: step 1/2.</text>
</comment>
<comment type="subunit">
    <text evidence="1">Homodecamer; pentamer of dimers.</text>
</comment>
<comment type="subcellular location">
    <subcellularLocation>
        <location evidence="1">Cytoplasm</location>
    </subcellularLocation>
</comment>
<comment type="similarity">
    <text evidence="1">Belongs to the PanB family.</text>
</comment>
<gene>
    <name evidence="1" type="primary">panB</name>
    <name type="ordered locus">MW2518</name>
</gene>
<sequence>MKTVSQLIDMKQKQTKISMVTAYDFPSAKQVEAAGIDMILVGDSLGMTVLGYESTVQVTLADMIHHGRAVRRGAPNTFVVVDMPIGAVGISMTQDLNHALKLYQETNANAIKAEGAHITPFIEKATAIGIPVVAHLGLTPQSVGVMGYKLQGATKEAAEQLILDAKNVEQAGAVALVLEAIPNDLAEEISKHLTIPVIGIGAGKGTDGQVLVYHDMLNYGVEHKAKFVKQFADFSVGVDGLKQYDQEVKSGAFPSEEYTYKKKIMNEVNNND</sequence>
<evidence type="ECO:0000255" key="1">
    <source>
        <dbReference type="HAMAP-Rule" id="MF_00156"/>
    </source>
</evidence>
<proteinExistence type="inferred from homology"/>
<organism>
    <name type="scientific">Staphylococcus aureus (strain MW2)</name>
    <dbReference type="NCBI Taxonomy" id="196620"/>
    <lineage>
        <taxon>Bacteria</taxon>
        <taxon>Bacillati</taxon>
        <taxon>Bacillota</taxon>
        <taxon>Bacilli</taxon>
        <taxon>Bacillales</taxon>
        <taxon>Staphylococcaceae</taxon>
        <taxon>Staphylococcus</taxon>
    </lineage>
</organism>
<feature type="chain" id="PRO_0000184893" description="3-methyl-2-oxobutanoate hydroxymethyltransferase">
    <location>
        <begin position="1"/>
        <end position="272"/>
    </location>
</feature>
<feature type="active site" description="Proton acceptor" evidence="1">
    <location>
        <position position="179"/>
    </location>
</feature>
<feature type="binding site" evidence="1">
    <location>
        <begin position="43"/>
        <end position="44"/>
    </location>
    <ligand>
        <name>3-methyl-2-oxobutanoate</name>
        <dbReference type="ChEBI" id="CHEBI:11851"/>
    </ligand>
</feature>
<feature type="binding site" evidence="1">
    <location>
        <position position="43"/>
    </location>
    <ligand>
        <name>Mg(2+)</name>
        <dbReference type="ChEBI" id="CHEBI:18420"/>
    </ligand>
</feature>
<feature type="binding site" evidence="1">
    <location>
        <position position="82"/>
    </location>
    <ligand>
        <name>3-methyl-2-oxobutanoate</name>
        <dbReference type="ChEBI" id="CHEBI:11851"/>
    </ligand>
</feature>
<feature type="binding site" evidence="1">
    <location>
        <position position="82"/>
    </location>
    <ligand>
        <name>Mg(2+)</name>
        <dbReference type="ChEBI" id="CHEBI:18420"/>
    </ligand>
</feature>
<feature type="binding site" evidence="1">
    <location>
        <position position="112"/>
    </location>
    <ligand>
        <name>3-methyl-2-oxobutanoate</name>
        <dbReference type="ChEBI" id="CHEBI:11851"/>
    </ligand>
</feature>
<feature type="binding site" evidence="1">
    <location>
        <position position="114"/>
    </location>
    <ligand>
        <name>Mg(2+)</name>
        <dbReference type="ChEBI" id="CHEBI:18420"/>
    </ligand>
</feature>
<accession>P65657</accession>
<accession>Q99R38</accession>
<protein>
    <recommendedName>
        <fullName evidence="1">3-methyl-2-oxobutanoate hydroxymethyltransferase</fullName>
        <ecNumber evidence="1">2.1.2.11</ecNumber>
    </recommendedName>
    <alternativeName>
        <fullName evidence="1">Ketopantoate hydroxymethyltransferase</fullName>
        <shortName evidence="1">KPHMT</shortName>
    </alternativeName>
</protein>
<reference key="1">
    <citation type="journal article" date="2002" name="Lancet">
        <title>Genome and virulence determinants of high virulence community-acquired MRSA.</title>
        <authorList>
            <person name="Baba T."/>
            <person name="Takeuchi F."/>
            <person name="Kuroda M."/>
            <person name="Yuzawa H."/>
            <person name="Aoki K."/>
            <person name="Oguchi A."/>
            <person name="Nagai Y."/>
            <person name="Iwama N."/>
            <person name="Asano K."/>
            <person name="Naimi T."/>
            <person name="Kuroda H."/>
            <person name="Cui L."/>
            <person name="Yamamoto K."/>
            <person name="Hiramatsu K."/>
        </authorList>
    </citation>
    <scope>NUCLEOTIDE SEQUENCE [LARGE SCALE GENOMIC DNA]</scope>
    <source>
        <strain>MW2</strain>
    </source>
</reference>
<keyword id="KW-0963">Cytoplasm</keyword>
<keyword id="KW-0460">Magnesium</keyword>
<keyword id="KW-0479">Metal-binding</keyword>
<keyword id="KW-0566">Pantothenate biosynthesis</keyword>
<keyword id="KW-0808">Transferase</keyword>